<accession>P58730</accession>
<accession>Q8Y6L2</accession>
<name>MENE_LISMO</name>
<keyword id="KW-0067">ATP-binding</keyword>
<keyword id="KW-0436">Ligase</keyword>
<keyword id="KW-0474">Menaquinone biosynthesis</keyword>
<keyword id="KW-0547">Nucleotide-binding</keyword>
<keyword id="KW-1185">Reference proteome</keyword>
<evidence type="ECO:0000255" key="1">
    <source>
        <dbReference type="HAMAP-Rule" id="MF_00731"/>
    </source>
</evidence>
<evidence type="ECO:0000305" key="2"/>
<comment type="function">
    <text evidence="1">Converts 2-succinylbenzoate (OSB) to 2-succinylbenzoyl-CoA (OSB-CoA).</text>
</comment>
<comment type="catalytic activity">
    <reaction evidence="1">
        <text>2-succinylbenzoate + ATP + CoA = 2-succinylbenzoyl-CoA + AMP + diphosphate</text>
        <dbReference type="Rhea" id="RHEA:17009"/>
        <dbReference type="ChEBI" id="CHEBI:18325"/>
        <dbReference type="ChEBI" id="CHEBI:30616"/>
        <dbReference type="ChEBI" id="CHEBI:33019"/>
        <dbReference type="ChEBI" id="CHEBI:57287"/>
        <dbReference type="ChEBI" id="CHEBI:57364"/>
        <dbReference type="ChEBI" id="CHEBI:456215"/>
        <dbReference type="EC" id="6.2.1.26"/>
    </reaction>
</comment>
<comment type="pathway">
    <text evidence="1">Quinol/quinone metabolism; 1,4-dihydroxy-2-naphthoate biosynthesis; 1,4-dihydroxy-2-naphthoate from chorismate: step 5/7.</text>
</comment>
<comment type="pathway">
    <text evidence="1">Quinol/quinone metabolism; menaquinone biosynthesis.</text>
</comment>
<comment type="similarity">
    <text evidence="1">Belongs to the ATP-dependent AMP-binding enzyme family. MenE subfamily.</text>
</comment>
<comment type="sequence caution" evidence="2">
    <conflict type="erroneous initiation">
        <sequence resource="EMBL-CDS" id="CAC99750"/>
    </conflict>
</comment>
<feature type="chain" id="PRO_0000193164" description="2-succinylbenzoate--CoA ligase">
    <location>
        <begin position="1"/>
        <end position="467"/>
    </location>
</feature>
<protein>
    <recommendedName>
        <fullName evidence="1">2-succinylbenzoate--CoA ligase</fullName>
        <ecNumber evidence="1">6.2.1.26</ecNumber>
    </recommendedName>
    <alternativeName>
        <fullName evidence="1">o-succinylbenzoyl-CoA synthetase</fullName>
        <shortName evidence="1">OSB-CoA synthetase</shortName>
    </alternativeName>
</protein>
<proteinExistence type="inferred from homology"/>
<gene>
    <name evidence="1" type="primary">menE</name>
    <name type="ordered locus">lmo1672</name>
</gene>
<reference key="1">
    <citation type="journal article" date="2001" name="Science">
        <title>Comparative genomics of Listeria species.</title>
        <authorList>
            <person name="Glaser P."/>
            <person name="Frangeul L."/>
            <person name="Buchrieser C."/>
            <person name="Rusniok C."/>
            <person name="Amend A."/>
            <person name="Baquero F."/>
            <person name="Berche P."/>
            <person name="Bloecker H."/>
            <person name="Brandt P."/>
            <person name="Chakraborty T."/>
            <person name="Charbit A."/>
            <person name="Chetouani F."/>
            <person name="Couve E."/>
            <person name="de Daruvar A."/>
            <person name="Dehoux P."/>
            <person name="Domann E."/>
            <person name="Dominguez-Bernal G."/>
            <person name="Duchaud E."/>
            <person name="Durant L."/>
            <person name="Dussurget O."/>
            <person name="Entian K.-D."/>
            <person name="Fsihi H."/>
            <person name="Garcia-del Portillo F."/>
            <person name="Garrido P."/>
            <person name="Gautier L."/>
            <person name="Goebel W."/>
            <person name="Gomez-Lopez N."/>
            <person name="Hain T."/>
            <person name="Hauf J."/>
            <person name="Jackson D."/>
            <person name="Jones L.-M."/>
            <person name="Kaerst U."/>
            <person name="Kreft J."/>
            <person name="Kuhn M."/>
            <person name="Kunst F."/>
            <person name="Kurapkat G."/>
            <person name="Madueno E."/>
            <person name="Maitournam A."/>
            <person name="Mata Vicente J."/>
            <person name="Ng E."/>
            <person name="Nedjari H."/>
            <person name="Nordsiek G."/>
            <person name="Novella S."/>
            <person name="de Pablos B."/>
            <person name="Perez-Diaz J.-C."/>
            <person name="Purcell R."/>
            <person name="Remmel B."/>
            <person name="Rose M."/>
            <person name="Schlueter T."/>
            <person name="Simoes N."/>
            <person name="Tierrez A."/>
            <person name="Vazquez-Boland J.-A."/>
            <person name="Voss H."/>
            <person name="Wehland J."/>
            <person name="Cossart P."/>
        </authorList>
    </citation>
    <scope>NUCLEOTIDE SEQUENCE [LARGE SCALE GENOMIC DNA]</scope>
    <source>
        <strain>ATCC BAA-679 / EGD-e</strain>
    </source>
</reference>
<sequence length="467" mass="51874">MTNWLQKRVRLSPKETALVFEGKEETFEEISEAVERLAGKLFALGIRKDEMIALLGKNDRMTFLLIHALQQLGAVTLFLNNRLTKKEIAYQLANAEVKQVIVADTFEDKVGAGISYSELAETDYKEPELLETWDLSRTASIMYTSGTTGKPKGVIQTYENHWWSAVASVLNLGLTEKDSWLCAVPIFHISGLSIMMRSVIYGIPVYLEEHFDEEKITQLLESGKVSTISVVTSMLERLLKIHGGSYHPNVRTILLGGGPASKTVLEICKQRDIPLVQSFGMTETASQIVTLPPKDALNKIGSSGKALFPAEVKIADDGEILLKGPSITPGYLHNKKATEASFVDGWFKTGDIGYLDEEGFLFVVERRSDLIISGGENIYPTEIEHVIGEYVAVKEVAVIGQPDDKWGSVPVAFIVAEETFDEDELQLICQTNLASYKIPKQIIIVEKLPKTASGKIQRNKLKERHSK</sequence>
<organism>
    <name type="scientific">Listeria monocytogenes serovar 1/2a (strain ATCC BAA-679 / EGD-e)</name>
    <dbReference type="NCBI Taxonomy" id="169963"/>
    <lineage>
        <taxon>Bacteria</taxon>
        <taxon>Bacillati</taxon>
        <taxon>Bacillota</taxon>
        <taxon>Bacilli</taxon>
        <taxon>Bacillales</taxon>
        <taxon>Listeriaceae</taxon>
        <taxon>Listeria</taxon>
    </lineage>
</organism>
<dbReference type="EC" id="6.2.1.26" evidence="1"/>
<dbReference type="EMBL" id="AL591980">
    <property type="protein sequence ID" value="CAC99750.1"/>
    <property type="status" value="ALT_INIT"/>
    <property type="molecule type" value="Genomic_DNA"/>
</dbReference>
<dbReference type="PIR" id="AH1283">
    <property type="entry name" value="AH1283"/>
</dbReference>
<dbReference type="RefSeq" id="NP_465197.1">
    <property type="nucleotide sequence ID" value="NC_003210.1"/>
</dbReference>
<dbReference type="SMR" id="P58730"/>
<dbReference type="STRING" id="169963.gene:17594329"/>
<dbReference type="PaxDb" id="169963-lmo1672"/>
<dbReference type="EnsemblBacteria" id="CAC99750">
    <property type="protein sequence ID" value="CAC99750"/>
    <property type="gene ID" value="CAC99750"/>
</dbReference>
<dbReference type="GeneID" id="985655"/>
<dbReference type="KEGG" id="lmo:lmo1672"/>
<dbReference type="PATRIC" id="fig|169963.11.peg.1715"/>
<dbReference type="eggNOG" id="COG0318">
    <property type="taxonomic scope" value="Bacteria"/>
</dbReference>
<dbReference type="HOGENOM" id="CLU_000022_59_0_9"/>
<dbReference type="OrthoDB" id="9762242at2"/>
<dbReference type="PhylomeDB" id="P58730"/>
<dbReference type="UniPathway" id="UPA00079"/>
<dbReference type="UniPathway" id="UPA01057">
    <property type="reaction ID" value="UER00166"/>
</dbReference>
<dbReference type="Proteomes" id="UP000000817">
    <property type="component" value="Chromosome"/>
</dbReference>
<dbReference type="GO" id="GO:0005524">
    <property type="term" value="F:ATP binding"/>
    <property type="evidence" value="ECO:0007669"/>
    <property type="project" value="UniProtKB-KW"/>
</dbReference>
<dbReference type="GO" id="GO:0008756">
    <property type="term" value="F:o-succinylbenzoate-CoA ligase activity"/>
    <property type="evidence" value="ECO:0007669"/>
    <property type="project" value="UniProtKB-UniRule"/>
</dbReference>
<dbReference type="GO" id="GO:0009234">
    <property type="term" value="P:menaquinone biosynthetic process"/>
    <property type="evidence" value="ECO:0007669"/>
    <property type="project" value="UniProtKB-UniRule"/>
</dbReference>
<dbReference type="CDD" id="cd05912">
    <property type="entry name" value="OSB_CoA_lg"/>
    <property type="match status" value="1"/>
</dbReference>
<dbReference type="FunFam" id="3.30.300.30:FF:000008">
    <property type="entry name" value="2,3-dihydroxybenzoate-AMP ligase"/>
    <property type="match status" value="1"/>
</dbReference>
<dbReference type="FunFam" id="3.40.50.12780:FF:000103">
    <property type="entry name" value="2-succinylbenzoate--CoA ligase"/>
    <property type="match status" value="1"/>
</dbReference>
<dbReference type="Gene3D" id="3.30.300.30">
    <property type="match status" value="1"/>
</dbReference>
<dbReference type="Gene3D" id="3.40.50.12780">
    <property type="entry name" value="N-terminal domain of ligase-like"/>
    <property type="match status" value="1"/>
</dbReference>
<dbReference type="HAMAP" id="MF_00731">
    <property type="entry name" value="MenE"/>
    <property type="match status" value="1"/>
</dbReference>
<dbReference type="InterPro" id="IPR025110">
    <property type="entry name" value="AMP-bd_C"/>
</dbReference>
<dbReference type="InterPro" id="IPR045851">
    <property type="entry name" value="AMP-bd_C_sf"/>
</dbReference>
<dbReference type="InterPro" id="IPR020845">
    <property type="entry name" value="AMP-binding_CS"/>
</dbReference>
<dbReference type="InterPro" id="IPR000873">
    <property type="entry name" value="AMP-dep_synth/lig_dom"/>
</dbReference>
<dbReference type="InterPro" id="IPR042099">
    <property type="entry name" value="ANL_N_sf"/>
</dbReference>
<dbReference type="InterPro" id="IPR010192">
    <property type="entry name" value="MenE"/>
</dbReference>
<dbReference type="NCBIfam" id="TIGR01923">
    <property type="entry name" value="menE"/>
    <property type="match status" value="1"/>
</dbReference>
<dbReference type="NCBIfam" id="NF002966">
    <property type="entry name" value="PRK03640.1"/>
    <property type="match status" value="1"/>
</dbReference>
<dbReference type="PANTHER" id="PTHR43201">
    <property type="entry name" value="ACYL-COA SYNTHETASE"/>
    <property type="match status" value="1"/>
</dbReference>
<dbReference type="PANTHER" id="PTHR43201:SF5">
    <property type="entry name" value="MEDIUM-CHAIN ACYL-COA LIGASE ACSF2, MITOCHONDRIAL"/>
    <property type="match status" value="1"/>
</dbReference>
<dbReference type="Pfam" id="PF00501">
    <property type="entry name" value="AMP-binding"/>
    <property type="match status" value="1"/>
</dbReference>
<dbReference type="Pfam" id="PF13193">
    <property type="entry name" value="AMP-binding_C"/>
    <property type="match status" value="1"/>
</dbReference>
<dbReference type="SUPFAM" id="SSF56801">
    <property type="entry name" value="Acetyl-CoA synthetase-like"/>
    <property type="match status" value="1"/>
</dbReference>
<dbReference type="PROSITE" id="PS00455">
    <property type="entry name" value="AMP_BINDING"/>
    <property type="match status" value="1"/>
</dbReference>